<dbReference type="EC" id="2.5.1.87" evidence="8"/>
<dbReference type="EMBL" id="X83276">
    <property type="protein sequence ID" value="CAA58254.1"/>
    <property type="molecule type" value="Genomic_DNA"/>
</dbReference>
<dbReference type="EMBL" id="Z74241">
    <property type="protein sequence ID" value="CAA98770.1"/>
    <property type="molecule type" value="Genomic_DNA"/>
</dbReference>
<dbReference type="EMBL" id="BK006938">
    <property type="protein sequence ID" value="DAA11670.1"/>
    <property type="molecule type" value="Genomic_DNA"/>
</dbReference>
<dbReference type="PIR" id="S58784">
    <property type="entry name" value="S58784"/>
</dbReference>
<dbReference type="RefSeq" id="NP_010088.1">
    <property type="nucleotide sequence ID" value="NM_001180253.1"/>
</dbReference>
<dbReference type="PDB" id="6JCN">
    <property type="method" value="X-ray"/>
    <property type="resolution" value="2.00 A"/>
    <property type="chains" value="A/B=148-375"/>
</dbReference>
<dbReference type="PDBsum" id="6JCN"/>
<dbReference type="SMR" id="Q12063"/>
<dbReference type="BioGRID" id="31852">
    <property type="interactions" value="292"/>
</dbReference>
<dbReference type="ComplexPortal" id="CPX-162">
    <property type="entry name" value="Dehydrodolichyl diphosphate synthase complex variant RER2"/>
</dbReference>
<dbReference type="ComplexPortal" id="CPX-166">
    <property type="entry name" value="Dehydrodolichyl diphosphate synthase complex variant SRT1"/>
</dbReference>
<dbReference type="DIP" id="DIP-1220N"/>
<dbReference type="FunCoup" id="Q12063">
    <property type="interactions" value="325"/>
</dbReference>
<dbReference type="IntAct" id="Q12063">
    <property type="interactions" value="17"/>
</dbReference>
<dbReference type="STRING" id="4932.YDL193W"/>
<dbReference type="iPTMnet" id="Q12063"/>
<dbReference type="PaxDb" id="4932-YDL193W"/>
<dbReference type="PeptideAtlas" id="Q12063"/>
<dbReference type="EnsemblFungi" id="YDL193W_mRNA">
    <property type="protein sequence ID" value="YDL193W"/>
    <property type="gene ID" value="YDL193W"/>
</dbReference>
<dbReference type="GeneID" id="851334"/>
<dbReference type="KEGG" id="sce:YDL193W"/>
<dbReference type="AGR" id="SGD:S000002352"/>
<dbReference type="SGD" id="S000002352">
    <property type="gene designation" value="NUS1"/>
</dbReference>
<dbReference type="VEuPathDB" id="FungiDB:YDL193W"/>
<dbReference type="eggNOG" id="KOG2818">
    <property type="taxonomic scope" value="Eukaryota"/>
</dbReference>
<dbReference type="GeneTree" id="ENSGT00390000003223"/>
<dbReference type="HOGENOM" id="CLU_051870_0_0_1"/>
<dbReference type="InParanoid" id="Q12063"/>
<dbReference type="OMA" id="AWSSCAG"/>
<dbReference type="OrthoDB" id="19639at2759"/>
<dbReference type="BioCyc" id="MetaCyc:G3O-29578-MONOMER"/>
<dbReference type="BioCyc" id="YEAST:G3O-29578-MONOMER"/>
<dbReference type="BRENDA" id="2.5.1.87">
    <property type="organism ID" value="984"/>
</dbReference>
<dbReference type="Reactome" id="R-SCE-446199">
    <property type="pathway name" value="Synthesis of Dolichyl-phosphate"/>
</dbReference>
<dbReference type="UniPathway" id="UPA00378"/>
<dbReference type="BioGRID-ORCS" id="851334">
    <property type="hits" value="3 hits in 10 CRISPR screens"/>
</dbReference>
<dbReference type="PRO" id="PR:Q12063"/>
<dbReference type="Proteomes" id="UP000002311">
    <property type="component" value="Chromosome IV"/>
</dbReference>
<dbReference type="RNAct" id="Q12063">
    <property type="molecule type" value="protein"/>
</dbReference>
<dbReference type="GO" id="GO:1904423">
    <property type="term" value="C:dehydrodolichyl diphosphate synthase complex"/>
    <property type="evidence" value="ECO:0000314"/>
    <property type="project" value="ComplexPortal"/>
</dbReference>
<dbReference type="GO" id="GO:0005783">
    <property type="term" value="C:endoplasmic reticulum"/>
    <property type="evidence" value="ECO:0000314"/>
    <property type="project" value="SGD"/>
</dbReference>
<dbReference type="GO" id="GO:0005789">
    <property type="term" value="C:endoplasmic reticulum membrane"/>
    <property type="evidence" value="ECO:0000318"/>
    <property type="project" value="GO_Central"/>
</dbReference>
<dbReference type="GO" id="GO:0005811">
    <property type="term" value="C:lipid droplet"/>
    <property type="evidence" value="ECO:0000314"/>
    <property type="project" value="SGD"/>
</dbReference>
<dbReference type="GO" id="GO:0005635">
    <property type="term" value="C:nuclear envelope"/>
    <property type="evidence" value="ECO:0007005"/>
    <property type="project" value="SGD"/>
</dbReference>
<dbReference type="GO" id="GO:0031965">
    <property type="term" value="C:nuclear membrane"/>
    <property type="evidence" value="ECO:0007669"/>
    <property type="project" value="UniProtKB-SubCell"/>
</dbReference>
<dbReference type="GO" id="GO:0045547">
    <property type="term" value="F:ditrans,polycis-polyprenyl diphosphate synthase [(2E,6E)-farnesyl diphosphate specific] activity"/>
    <property type="evidence" value="ECO:0007669"/>
    <property type="project" value="UniProtKB-EC"/>
</dbReference>
<dbReference type="GO" id="GO:0019408">
    <property type="term" value="P:dolichol biosynthetic process"/>
    <property type="evidence" value="ECO:0000314"/>
    <property type="project" value="SGD"/>
</dbReference>
<dbReference type="GO" id="GO:0006486">
    <property type="term" value="P:protein glycosylation"/>
    <property type="evidence" value="ECO:0000315"/>
    <property type="project" value="SGD"/>
</dbReference>
<dbReference type="FunFam" id="3.40.1180.10:FF:000011">
    <property type="entry name" value="NUS1p putative prenyltransferase"/>
    <property type="match status" value="1"/>
</dbReference>
<dbReference type="Gene3D" id="3.40.1180.10">
    <property type="entry name" value="Decaprenyl diphosphate synthase-like"/>
    <property type="match status" value="1"/>
</dbReference>
<dbReference type="InterPro" id="IPR038887">
    <property type="entry name" value="Nus1/NgBR"/>
</dbReference>
<dbReference type="InterPro" id="IPR036424">
    <property type="entry name" value="UPP_synth-like_sf"/>
</dbReference>
<dbReference type="PANTHER" id="PTHR21528">
    <property type="entry name" value="DEHYDRODOLICHYL DIPHOSPHATE SYNTHASE COMPLEX SUBUNIT NUS1"/>
    <property type="match status" value="1"/>
</dbReference>
<dbReference type="PANTHER" id="PTHR21528:SF0">
    <property type="entry name" value="DEHYDRODOLICHYL DIPHOSPHATE SYNTHASE COMPLEX SUBUNIT NUS1"/>
    <property type="match status" value="1"/>
</dbReference>
<dbReference type="SUPFAM" id="SSF64005">
    <property type="entry name" value="Undecaprenyl diphosphate synthase"/>
    <property type="match status" value="1"/>
</dbReference>
<proteinExistence type="evidence at protein level"/>
<reference key="1">
    <citation type="journal article" date="1995" name="Yeast">
        <title>New open reading frames, one of which is similar to the nifV gene of Azotobacter vinelandii, found on a 12.5 kbp fragment of chromosome IV of Saccharomyces cerevisiae.</title>
        <authorList>
            <person name="Verhasselt P."/>
            <person name="Voet M."/>
            <person name="Volckaert G."/>
        </authorList>
    </citation>
    <scope>NUCLEOTIDE SEQUENCE [GENOMIC DNA]</scope>
    <source>
        <strain>ATCC 96604 / S288c / FY1679</strain>
    </source>
</reference>
<reference key="2">
    <citation type="journal article" date="1997" name="Nature">
        <title>The nucleotide sequence of Saccharomyces cerevisiae chromosome IV.</title>
        <authorList>
            <person name="Jacq C."/>
            <person name="Alt-Moerbe J."/>
            <person name="Andre B."/>
            <person name="Arnold W."/>
            <person name="Bahr A."/>
            <person name="Ballesta J.P.G."/>
            <person name="Bargues M."/>
            <person name="Baron L."/>
            <person name="Becker A."/>
            <person name="Biteau N."/>
            <person name="Bloecker H."/>
            <person name="Blugeon C."/>
            <person name="Boskovic J."/>
            <person name="Brandt P."/>
            <person name="Brueckner M."/>
            <person name="Buitrago M.J."/>
            <person name="Coster F."/>
            <person name="Delaveau T."/>
            <person name="del Rey F."/>
            <person name="Dujon B."/>
            <person name="Eide L.G."/>
            <person name="Garcia-Cantalejo J.M."/>
            <person name="Goffeau A."/>
            <person name="Gomez-Peris A."/>
            <person name="Granotier C."/>
            <person name="Hanemann V."/>
            <person name="Hankeln T."/>
            <person name="Hoheisel J.D."/>
            <person name="Jaeger W."/>
            <person name="Jimenez A."/>
            <person name="Jonniaux J.-L."/>
            <person name="Kraemer C."/>
            <person name="Kuester H."/>
            <person name="Laamanen P."/>
            <person name="Legros Y."/>
            <person name="Louis E.J."/>
            <person name="Moeller-Rieker S."/>
            <person name="Monnet A."/>
            <person name="Moro M."/>
            <person name="Mueller-Auer S."/>
            <person name="Nussbaumer B."/>
            <person name="Paricio N."/>
            <person name="Paulin L."/>
            <person name="Perea J."/>
            <person name="Perez-Alonso M."/>
            <person name="Perez-Ortin J.E."/>
            <person name="Pohl T.M."/>
            <person name="Prydz H."/>
            <person name="Purnelle B."/>
            <person name="Rasmussen S.W."/>
            <person name="Remacha M.A."/>
            <person name="Revuelta J.L."/>
            <person name="Rieger M."/>
            <person name="Salom D."/>
            <person name="Saluz H.P."/>
            <person name="Saiz J.E."/>
            <person name="Saren A.-M."/>
            <person name="Schaefer M."/>
            <person name="Scharfe M."/>
            <person name="Schmidt E.R."/>
            <person name="Schneider C."/>
            <person name="Scholler P."/>
            <person name="Schwarz S."/>
            <person name="Soler-Mira A."/>
            <person name="Urrestarazu L.A."/>
            <person name="Verhasselt P."/>
            <person name="Vissers S."/>
            <person name="Voet M."/>
            <person name="Volckaert G."/>
            <person name="Wagner G."/>
            <person name="Wambutt R."/>
            <person name="Wedler E."/>
            <person name="Wedler H."/>
            <person name="Woelfl S."/>
            <person name="Harris D.E."/>
            <person name="Bowman S."/>
            <person name="Brown D."/>
            <person name="Churcher C.M."/>
            <person name="Connor R."/>
            <person name="Dedman K."/>
            <person name="Gentles S."/>
            <person name="Hamlin N."/>
            <person name="Hunt S."/>
            <person name="Jones L."/>
            <person name="McDonald S."/>
            <person name="Murphy L.D."/>
            <person name="Niblett D."/>
            <person name="Odell C."/>
            <person name="Oliver K."/>
            <person name="Rajandream M.A."/>
            <person name="Richards C."/>
            <person name="Shore L."/>
            <person name="Walsh S.V."/>
            <person name="Barrell B.G."/>
            <person name="Dietrich F.S."/>
            <person name="Mulligan J.T."/>
            <person name="Allen E."/>
            <person name="Araujo R."/>
            <person name="Aviles E."/>
            <person name="Berno A."/>
            <person name="Carpenter J."/>
            <person name="Chen E."/>
            <person name="Cherry J.M."/>
            <person name="Chung E."/>
            <person name="Duncan M."/>
            <person name="Hunicke-Smith S."/>
            <person name="Hyman R.W."/>
            <person name="Komp C."/>
            <person name="Lashkari D."/>
            <person name="Lew H."/>
            <person name="Lin D."/>
            <person name="Mosedale D."/>
            <person name="Nakahara K."/>
            <person name="Namath A."/>
            <person name="Oefner P."/>
            <person name="Oh C."/>
            <person name="Petel F.X."/>
            <person name="Roberts D."/>
            <person name="Schramm S."/>
            <person name="Schroeder M."/>
            <person name="Shogren T."/>
            <person name="Shroff N."/>
            <person name="Winant A."/>
            <person name="Yelton M.A."/>
            <person name="Botstein D."/>
            <person name="Davis R.W."/>
            <person name="Johnston M."/>
            <person name="Andrews S."/>
            <person name="Brinkman R."/>
            <person name="Cooper J."/>
            <person name="Ding H."/>
            <person name="Du Z."/>
            <person name="Favello A."/>
            <person name="Fulton L."/>
            <person name="Gattung S."/>
            <person name="Greco T."/>
            <person name="Hallsworth K."/>
            <person name="Hawkins J."/>
            <person name="Hillier L.W."/>
            <person name="Jier M."/>
            <person name="Johnson D."/>
            <person name="Johnston L."/>
            <person name="Kirsten J."/>
            <person name="Kucaba T."/>
            <person name="Langston Y."/>
            <person name="Latreille P."/>
            <person name="Le T."/>
            <person name="Mardis E."/>
            <person name="Menezes S."/>
            <person name="Miller N."/>
            <person name="Nhan M."/>
            <person name="Pauley A."/>
            <person name="Peluso D."/>
            <person name="Rifkin L."/>
            <person name="Riles L."/>
            <person name="Taich A."/>
            <person name="Trevaskis E."/>
            <person name="Vignati D."/>
            <person name="Wilcox L."/>
            <person name="Wohldman P."/>
            <person name="Vaudin M."/>
            <person name="Wilson R."/>
            <person name="Waterston R."/>
            <person name="Albermann K."/>
            <person name="Hani J."/>
            <person name="Heumann K."/>
            <person name="Kleine K."/>
            <person name="Mewes H.-W."/>
            <person name="Zollner A."/>
            <person name="Zaccaria P."/>
        </authorList>
    </citation>
    <scope>NUCLEOTIDE SEQUENCE [LARGE SCALE GENOMIC DNA]</scope>
    <source>
        <strain>ATCC 204508 / S288c</strain>
    </source>
</reference>
<reference key="3">
    <citation type="journal article" date="2014" name="G3 (Bethesda)">
        <title>The reference genome sequence of Saccharomyces cerevisiae: Then and now.</title>
        <authorList>
            <person name="Engel S.R."/>
            <person name="Dietrich F.S."/>
            <person name="Fisk D.G."/>
            <person name="Binkley G."/>
            <person name="Balakrishnan R."/>
            <person name="Costanzo M.C."/>
            <person name="Dwight S.S."/>
            <person name="Hitz B.C."/>
            <person name="Karra K."/>
            <person name="Nash R.S."/>
            <person name="Weng S."/>
            <person name="Wong E.D."/>
            <person name="Lloyd P."/>
            <person name="Skrzypek M.S."/>
            <person name="Miyasato S.R."/>
            <person name="Simison M."/>
            <person name="Cherry J.M."/>
        </authorList>
    </citation>
    <scope>GENOME REANNOTATION</scope>
    <source>
        <strain>ATCC 204508 / S288c</strain>
    </source>
</reference>
<reference key="4">
    <citation type="journal article" date="1999" name="J. Bacteriol.">
        <title>Identification and characterization of major lipid particle proteins of the yeast Saccharomyces cerevisiae.</title>
        <authorList>
            <person name="Athenstaedt K."/>
            <person name="Zweytick D."/>
            <person name="Jandrositz A."/>
            <person name="Kohlwein S.D."/>
            <person name="Daum G."/>
        </authorList>
    </citation>
    <scope>SUBCELLULAR LOCATION</scope>
    <scope>IDENTIFICATION BY MASS SPECTROMETRY</scope>
</reference>
<reference key="5">
    <citation type="journal article" date="2000" name="FEBS Lett.">
        <title>A novel strategy for constructing N-terminal chromosomal fusions to green fluorescent protein in the yeast Saccharomyces cerevisiae.</title>
        <authorList>
            <person name="Prein B."/>
            <person name="Natter K."/>
            <person name="Kohlwein S.D."/>
        </authorList>
    </citation>
    <scope>SUBCELLULAR LOCATION</scope>
</reference>
<reference key="6">
    <citation type="journal article" date="2003" name="Mol. Cell">
        <title>Assigning function to yeast proteins by integration of technologies.</title>
        <authorList>
            <person name="Hazbun T.R."/>
            <person name="Malmstroem L."/>
            <person name="Anderson S."/>
            <person name="Graczyk B.J."/>
            <person name="Fox B."/>
            <person name="Riffle M."/>
            <person name="Sundin B.A."/>
            <person name="Aranda J.D."/>
            <person name="McDonald W.H."/>
            <person name="Chiu C.-H."/>
            <person name="Snydsman B.E."/>
            <person name="Bradley P."/>
            <person name="Muller E.G.D."/>
            <person name="Fields S."/>
            <person name="Baker D."/>
            <person name="Yates J.R. III"/>
            <person name="Davis T.N."/>
        </authorList>
    </citation>
    <scope>SUBCELLULAR LOCATION [LARGE SCALE ANALYSIS]</scope>
</reference>
<reference key="7">
    <citation type="journal article" date="2003" name="Nature">
        <title>Global analysis of protein localization in budding yeast.</title>
        <authorList>
            <person name="Huh W.-K."/>
            <person name="Falvo J.V."/>
            <person name="Gerke L.C."/>
            <person name="Carroll A.S."/>
            <person name="Howson R.W."/>
            <person name="Weissman J.S."/>
            <person name="O'Shea E.K."/>
        </authorList>
    </citation>
    <scope>SUBCELLULAR LOCATION [LARGE SCALE ANALYSIS]</scope>
</reference>
<reference key="8">
    <citation type="journal article" date="2008" name="Mol. Cell. Proteomics">
        <title>A multidimensional chromatography technology for in-depth phosphoproteome analysis.</title>
        <authorList>
            <person name="Albuquerque C.P."/>
            <person name="Smolka M.B."/>
            <person name="Payne S.H."/>
            <person name="Bafna V."/>
            <person name="Eng J."/>
            <person name="Zhou H."/>
        </authorList>
    </citation>
    <scope>IDENTIFICATION BY MASS SPECTROMETRY [LARGE SCALE ANALYSIS]</scope>
</reference>
<reference key="9">
    <citation type="journal article" date="2014" name="Cell Metab.">
        <title>Mutation of Nogo-B receptor, a subunit of cis-prenyltransferase, causes a congenital disorder of glycosylation.</title>
        <authorList>
            <person name="Park E.J."/>
            <person name="Grabinska K.A."/>
            <person name="Guan Z."/>
            <person name="Stranecky V."/>
            <person name="Hartmannova H."/>
            <person name="Hodanova K."/>
            <person name="Baresova V."/>
            <person name="Sovova J."/>
            <person name="Jozsef L."/>
            <person name="Ondruskova N."/>
            <person name="Hansikova H."/>
            <person name="Honzik T."/>
            <person name="Zeman J."/>
            <person name="Hulkova H."/>
            <person name="Wen R."/>
            <person name="Kmoch S."/>
            <person name="Sessa W.C."/>
        </authorList>
    </citation>
    <scope>CATALYTIC ACTIVITY</scope>
    <scope>FUNCTION</scope>
    <scope>SUBUNIT</scope>
    <scope>MUTAGENESIS OF ASN-372</scope>
</reference>
<sequence>MPTMIKKDDKAMEPPNEKPHRKIERDDVPESSNHIPPPESGVLKGGKVNSKTRALKAVTSIIADADENPQKKVNNETNGVQKQKTEDLSKRIGKFEYLFYKFLLVLLYICFGLFRYGQYQYNKMKLRIFSIIYNHAYTPQLIRQDVIPLKKIPKRLAAILEVKPVGDVGGGVTGLLNDASEIVCWTVSAGIKHLMLYDYDGILQRNVPELRMEIHSNLAKYFGPAHVPNYAVKIPHSNKIFYNLDGIETETDVGNEIEANQEKDKIAIEISLLSNRDGRETIVDLTKTMAELCAVNELSVSDITMDLVDSELKQLVGPEPDLLLYFGPSLDLQGFPPWHIRLTEFYWEKDNNEVIYSVFIRGLRQYAGCKVNVGK</sequence>
<name>UPPS_YEAST</name>
<keyword id="KW-0002">3D-structure</keyword>
<keyword id="KW-0256">Endoplasmic reticulum</keyword>
<keyword id="KW-0551">Lipid droplet</keyword>
<keyword id="KW-0460">Magnesium</keyword>
<keyword id="KW-0472">Membrane</keyword>
<keyword id="KW-0539">Nucleus</keyword>
<keyword id="KW-1185">Reference proteome</keyword>
<keyword id="KW-0808">Transferase</keyword>
<keyword id="KW-0812">Transmembrane</keyword>
<keyword id="KW-1133">Transmembrane helix</keyword>
<gene>
    <name type="primary">NUS1</name>
    <name evidence="12" type="ordered locus">YDL193W</name>
    <name evidence="10" type="ORF">D1239</name>
</gene>
<organism>
    <name type="scientific">Saccharomyces cerevisiae (strain ATCC 204508 / S288c)</name>
    <name type="common">Baker's yeast</name>
    <dbReference type="NCBI Taxonomy" id="559292"/>
    <lineage>
        <taxon>Eukaryota</taxon>
        <taxon>Fungi</taxon>
        <taxon>Dikarya</taxon>
        <taxon>Ascomycota</taxon>
        <taxon>Saccharomycotina</taxon>
        <taxon>Saccharomycetes</taxon>
        <taxon>Saccharomycetales</taxon>
        <taxon>Saccharomycetaceae</taxon>
        <taxon>Saccharomyces</taxon>
    </lineage>
</organism>
<comment type="function">
    <text evidence="8">With SRT1 or RER2, forms the dehydrodolichyl diphosphate synthase (DDS) complex, an essential component of the dolichol monophosphate (Dol-P) biosynthetic machinery. Adds multiple copies of isopentenyl pyrophosphate (IPP) to farnesyl pyrophosphate (FPP) to produce dehydrodolichyl diphosphate (Dedol-PP), a precursor of dolichol which is utilized as a sugar carrier in protein glycosylation in the endoplasmic reticulum (ER).</text>
</comment>
<comment type="catalytic activity">
    <reaction evidence="8">
        <text>n isopentenyl diphosphate + (2E,6E)-farnesyl diphosphate = a di-trans,poly-cis-polyprenyl diphosphate + n diphosphate</text>
        <dbReference type="Rhea" id="RHEA:53008"/>
        <dbReference type="Rhea" id="RHEA-COMP:19494"/>
        <dbReference type="ChEBI" id="CHEBI:33019"/>
        <dbReference type="ChEBI" id="CHEBI:128769"/>
        <dbReference type="ChEBI" id="CHEBI:136960"/>
        <dbReference type="ChEBI" id="CHEBI:175763"/>
        <dbReference type="EC" id="2.5.1.87"/>
    </reaction>
</comment>
<comment type="cofactor">
    <cofactor evidence="1">
        <name>Mg(2+)</name>
        <dbReference type="ChEBI" id="CHEBI:18420"/>
    </cofactor>
</comment>
<comment type="pathway">
    <text evidence="11">Protein modification; protein glycosylation.</text>
</comment>
<comment type="subunit">
    <text evidence="9">Forms an active dehydrodolichyl diphosphate synthase complex with either SRT1 or RER2.</text>
</comment>
<comment type="subcellular location">
    <subcellularLocation>
        <location evidence="11">Endoplasmic reticulum membrane</location>
        <topology evidence="11">Single-pass membrane protein</topology>
    </subcellularLocation>
    <subcellularLocation>
        <location evidence="4 5 6 7">Lipid droplet</location>
    </subcellularLocation>
    <subcellularLocation>
        <location evidence="7">Nucleus membrane</location>
        <topology evidence="11">Single-pass membrane protein</topology>
    </subcellularLocation>
</comment>
<comment type="similarity">
    <text evidence="11">Belongs to the UPP synthase family.</text>
</comment>
<protein>
    <recommendedName>
        <fullName evidence="11">Dehydrodolichyl diphosphate synthase complex subunit NUS1</fullName>
        <ecNumber evidence="8">2.5.1.87</ecNumber>
    </recommendedName>
    <alternativeName>
        <fullName evidence="12">Nuclear undecaprenyl pyrophosphate synthase 1</fullName>
    </alternativeName>
</protein>
<accession>Q12063</accession>
<accession>D6VRG0</accession>
<feature type="chain" id="PRO_0000242134" description="Dehydrodolichyl diphosphate synthase complex subunit NUS1">
    <location>
        <begin position="1"/>
        <end position="375"/>
    </location>
</feature>
<feature type="transmembrane region" description="Helical" evidence="2">
    <location>
        <begin position="97"/>
        <end position="119"/>
    </location>
</feature>
<feature type="region of interest" description="Disordered" evidence="3">
    <location>
        <begin position="1"/>
        <end position="48"/>
    </location>
</feature>
<feature type="compositionally biased region" description="Basic and acidic residues" evidence="3">
    <location>
        <begin position="1"/>
        <end position="28"/>
    </location>
</feature>
<feature type="mutagenesis site" description="Loss of function.">
    <original>N</original>
    <variation>H</variation>
    <location>
        <position position="372"/>
    </location>
</feature>
<feature type="strand" evidence="13">
    <location>
        <begin position="154"/>
        <end position="159"/>
    </location>
</feature>
<feature type="helix" evidence="13">
    <location>
        <begin position="171"/>
        <end position="188"/>
    </location>
</feature>
<feature type="strand" evidence="13">
    <location>
        <begin position="193"/>
        <end position="197"/>
    </location>
</feature>
<feature type="helix" evidence="13">
    <location>
        <begin position="202"/>
        <end position="205"/>
    </location>
</feature>
<feature type="helix" evidence="13">
    <location>
        <begin position="207"/>
        <end position="222"/>
    </location>
</feature>
<feature type="strand" evidence="13">
    <location>
        <begin position="230"/>
        <end position="234"/>
    </location>
</feature>
<feature type="helix" evidence="13">
    <location>
        <begin position="235"/>
        <end position="237"/>
    </location>
</feature>
<feature type="strand" evidence="13">
    <location>
        <begin position="239"/>
        <end position="242"/>
    </location>
</feature>
<feature type="turn" evidence="13">
    <location>
        <begin position="243"/>
        <end position="247"/>
    </location>
</feature>
<feature type="strand" evidence="13">
    <location>
        <begin position="267"/>
        <end position="273"/>
    </location>
</feature>
<feature type="helix" evidence="13">
    <location>
        <begin position="275"/>
        <end position="277"/>
    </location>
</feature>
<feature type="helix" evidence="13">
    <location>
        <begin position="279"/>
        <end position="294"/>
    </location>
</feature>
<feature type="helix" evidence="13">
    <location>
        <begin position="300"/>
        <end position="302"/>
    </location>
</feature>
<feature type="helix" evidence="13">
    <location>
        <begin position="305"/>
        <end position="315"/>
    </location>
</feature>
<feature type="strand" evidence="13">
    <location>
        <begin position="321"/>
        <end position="325"/>
    </location>
</feature>
<feature type="strand" evidence="13">
    <location>
        <begin position="327"/>
        <end position="329"/>
    </location>
</feature>
<feature type="strand" evidence="13">
    <location>
        <begin position="344"/>
        <end position="346"/>
    </location>
</feature>
<feature type="helix" evidence="13">
    <location>
        <begin position="356"/>
        <end position="367"/>
    </location>
</feature>
<evidence type="ECO:0000250" key="1">
    <source>
        <dbReference type="UniProtKB" id="Q96E22"/>
    </source>
</evidence>
<evidence type="ECO:0000255" key="2"/>
<evidence type="ECO:0000256" key="3">
    <source>
        <dbReference type="SAM" id="MobiDB-lite"/>
    </source>
</evidence>
<evidence type="ECO:0000269" key="4">
    <source>
    </source>
</evidence>
<evidence type="ECO:0000269" key="5">
    <source>
    </source>
</evidence>
<evidence type="ECO:0000269" key="6">
    <source>
    </source>
</evidence>
<evidence type="ECO:0000269" key="7">
    <source>
    </source>
</evidence>
<evidence type="ECO:0000269" key="8">
    <source>
    </source>
</evidence>
<evidence type="ECO:0000303" key="9">
    <source>
    </source>
</evidence>
<evidence type="ECO:0000303" key="10">
    <source>
    </source>
</evidence>
<evidence type="ECO:0000305" key="11"/>
<evidence type="ECO:0000312" key="12">
    <source>
        <dbReference type="SGD" id="S000002352"/>
    </source>
</evidence>
<evidence type="ECO:0007829" key="13">
    <source>
        <dbReference type="PDB" id="6JCN"/>
    </source>
</evidence>